<gene>
    <name evidence="1" type="primary">miaB</name>
    <name type="ordered locus">Aave_0875</name>
</gene>
<feature type="chain" id="PRO_0000374085" description="tRNA-2-methylthio-N(6)-dimethylallyladenosine synthase">
    <location>
        <begin position="1"/>
        <end position="449"/>
    </location>
</feature>
<feature type="domain" description="MTTase N-terminal" evidence="1">
    <location>
        <begin position="3"/>
        <end position="118"/>
    </location>
</feature>
<feature type="domain" description="Radical SAM core" evidence="2">
    <location>
        <begin position="141"/>
        <end position="376"/>
    </location>
</feature>
<feature type="domain" description="TRAM" evidence="1">
    <location>
        <begin position="377"/>
        <end position="440"/>
    </location>
</feature>
<feature type="binding site" evidence="1">
    <location>
        <position position="12"/>
    </location>
    <ligand>
        <name>[4Fe-4S] cluster</name>
        <dbReference type="ChEBI" id="CHEBI:49883"/>
        <label>1</label>
    </ligand>
</feature>
<feature type="binding site" evidence="1">
    <location>
        <position position="49"/>
    </location>
    <ligand>
        <name>[4Fe-4S] cluster</name>
        <dbReference type="ChEBI" id="CHEBI:49883"/>
        <label>1</label>
    </ligand>
</feature>
<feature type="binding site" evidence="1">
    <location>
        <position position="81"/>
    </location>
    <ligand>
        <name>[4Fe-4S] cluster</name>
        <dbReference type="ChEBI" id="CHEBI:49883"/>
        <label>1</label>
    </ligand>
</feature>
<feature type="binding site" evidence="1">
    <location>
        <position position="155"/>
    </location>
    <ligand>
        <name>[4Fe-4S] cluster</name>
        <dbReference type="ChEBI" id="CHEBI:49883"/>
        <label>2</label>
        <note>4Fe-4S-S-AdoMet</note>
    </ligand>
</feature>
<feature type="binding site" evidence="1">
    <location>
        <position position="159"/>
    </location>
    <ligand>
        <name>[4Fe-4S] cluster</name>
        <dbReference type="ChEBI" id="CHEBI:49883"/>
        <label>2</label>
        <note>4Fe-4S-S-AdoMet</note>
    </ligand>
</feature>
<feature type="binding site" evidence="1">
    <location>
        <position position="162"/>
    </location>
    <ligand>
        <name>[4Fe-4S] cluster</name>
        <dbReference type="ChEBI" id="CHEBI:49883"/>
        <label>2</label>
        <note>4Fe-4S-S-AdoMet</note>
    </ligand>
</feature>
<proteinExistence type="inferred from homology"/>
<name>MIAB_PARC0</name>
<comment type="function">
    <text evidence="1">Catalyzes the methylthiolation of N6-(dimethylallyl)adenosine (i(6)A), leading to the formation of 2-methylthio-N6-(dimethylallyl)adenosine (ms(2)i(6)A) at position 37 in tRNAs that read codons beginning with uridine.</text>
</comment>
<comment type="catalytic activity">
    <reaction evidence="1">
        <text>N(6)-dimethylallyladenosine(37) in tRNA + (sulfur carrier)-SH + AH2 + 2 S-adenosyl-L-methionine = 2-methylsulfanyl-N(6)-dimethylallyladenosine(37) in tRNA + (sulfur carrier)-H + 5'-deoxyadenosine + L-methionine + A + S-adenosyl-L-homocysteine + 2 H(+)</text>
        <dbReference type="Rhea" id="RHEA:37067"/>
        <dbReference type="Rhea" id="RHEA-COMP:10375"/>
        <dbReference type="Rhea" id="RHEA-COMP:10376"/>
        <dbReference type="Rhea" id="RHEA-COMP:14737"/>
        <dbReference type="Rhea" id="RHEA-COMP:14739"/>
        <dbReference type="ChEBI" id="CHEBI:13193"/>
        <dbReference type="ChEBI" id="CHEBI:15378"/>
        <dbReference type="ChEBI" id="CHEBI:17319"/>
        <dbReference type="ChEBI" id="CHEBI:17499"/>
        <dbReference type="ChEBI" id="CHEBI:29917"/>
        <dbReference type="ChEBI" id="CHEBI:57844"/>
        <dbReference type="ChEBI" id="CHEBI:57856"/>
        <dbReference type="ChEBI" id="CHEBI:59789"/>
        <dbReference type="ChEBI" id="CHEBI:64428"/>
        <dbReference type="ChEBI" id="CHEBI:74415"/>
        <dbReference type="ChEBI" id="CHEBI:74417"/>
        <dbReference type="EC" id="2.8.4.3"/>
    </reaction>
</comment>
<comment type="cofactor">
    <cofactor evidence="1">
        <name>[4Fe-4S] cluster</name>
        <dbReference type="ChEBI" id="CHEBI:49883"/>
    </cofactor>
    <text evidence="1">Binds 2 [4Fe-4S] clusters. One cluster is coordinated with 3 cysteines and an exchangeable S-adenosyl-L-methionine.</text>
</comment>
<comment type="subunit">
    <text evidence="1">Monomer.</text>
</comment>
<comment type="subcellular location">
    <subcellularLocation>
        <location evidence="1">Cytoplasm</location>
    </subcellularLocation>
</comment>
<comment type="similarity">
    <text evidence="1">Belongs to the methylthiotransferase family. MiaB subfamily.</text>
</comment>
<evidence type="ECO:0000255" key="1">
    <source>
        <dbReference type="HAMAP-Rule" id="MF_01864"/>
    </source>
</evidence>
<evidence type="ECO:0000255" key="2">
    <source>
        <dbReference type="PROSITE-ProRule" id="PRU01266"/>
    </source>
</evidence>
<reference key="1">
    <citation type="submission" date="2006-12" db="EMBL/GenBank/DDBJ databases">
        <title>Complete sequence of Acidovorax avenae subsp. citrulli AAC00-1.</title>
        <authorList>
            <person name="Copeland A."/>
            <person name="Lucas S."/>
            <person name="Lapidus A."/>
            <person name="Barry K."/>
            <person name="Detter J.C."/>
            <person name="Glavina del Rio T."/>
            <person name="Dalin E."/>
            <person name="Tice H."/>
            <person name="Pitluck S."/>
            <person name="Kiss H."/>
            <person name="Brettin T."/>
            <person name="Bruce D."/>
            <person name="Han C."/>
            <person name="Tapia R."/>
            <person name="Gilna P."/>
            <person name="Schmutz J."/>
            <person name="Larimer F."/>
            <person name="Land M."/>
            <person name="Hauser L."/>
            <person name="Kyrpides N."/>
            <person name="Kim E."/>
            <person name="Stahl D."/>
            <person name="Richardson P."/>
        </authorList>
    </citation>
    <scope>NUCLEOTIDE SEQUENCE [LARGE SCALE GENOMIC DNA]</scope>
    <source>
        <strain>AAC00-1</strain>
    </source>
</reference>
<protein>
    <recommendedName>
        <fullName evidence="1">tRNA-2-methylthio-N(6)-dimethylallyladenosine synthase</fullName>
        <ecNumber evidence="1">2.8.4.3</ecNumber>
    </recommendedName>
    <alternativeName>
        <fullName evidence="1">(Dimethylallyl)adenosine tRNA methylthiotransferase MiaB</fullName>
    </alternativeName>
    <alternativeName>
        <fullName evidence="1">tRNA-i(6)A37 methylthiotransferase</fullName>
    </alternativeName>
</protein>
<keyword id="KW-0004">4Fe-4S</keyword>
<keyword id="KW-0963">Cytoplasm</keyword>
<keyword id="KW-0408">Iron</keyword>
<keyword id="KW-0411">Iron-sulfur</keyword>
<keyword id="KW-0479">Metal-binding</keyword>
<keyword id="KW-0949">S-adenosyl-L-methionine</keyword>
<keyword id="KW-0808">Transferase</keyword>
<keyword id="KW-0819">tRNA processing</keyword>
<organism>
    <name type="scientific">Paracidovorax citrulli (strain AAC00-1)</name>
    <name type="common">Acidovorax citrulli</name>
    <dbReference type="NCBI Taxonomy" id="397945"/>
    <lineage>
        <taxon>Bacteria</taxon>
        <taxon>Pseudomonadati</taxon>
        <taxon>Pseudomonadota</taxon>
        <taxon>Betaproteobacteria</taxon>
        <taxon>Burkholderiales</taxon>
        <taxon>Comamonadaceae</taxon>
        <taxon>Paracidovorax</taxon>
    </lineage>
</organism>
<sequence>MAKKVFVKTFGCQMNEYDSDKMVDVLNAAQGYEPTQDVEEADLILFNTCSVREKAQEKVFSDLGRIKHLKARGVKIGVGGCVASQEGDEIIKRAPYVDVVFGPQTLHRLPELLAQREALARPQVDISFPEIEKFDHLPPARVEGASAFVSIMEGCSKYCSYCVVPYTRGEEVSRPFDDVLVEVAGLADQGVKEVTLLGQNVNAYLGKMGGTAEVADFALLLEYVADITGIERIRFTTSHPNEFTQRLIDAYARIPKLVSHLHLPVQHGSDRILMAMKRGYTAMEYKSTIRKLRAIRPDLAMSSDFIVGFPGETEDDFGKMMKLIDDIHFDNSFSFIFSPRPGTPAASLHDDTPHEVKLRRLQELQAVINANIKSISESRVGTVQRILVEGASKRDGSELMGRTECNRVVNFAGHPRLVGQMVDVTITEAKAYTLRGEVVTADHGALAAH</sequence>
<accession>A1TKI5</accession>
<dbReference type="EC" id="2.8.4.3" evidence="1"/>
<dbReference type="EMBL" id="CP000512">
    <property type="protein sequence ID" value="ABM31473.1"/>
    <property type="molecule type" value="Genomic_DNA"/>
</dbReference>
<dbReference type="RefSeq" id="WP_011794031.1">
    <property type="nucleotide sequence ID" value="NC_008752.1"/>
</dbReference>
<dbReference type="SMR" id="A1TKI5"/>
<dbReference type="STRING" id="397945.Aave_0875"/>
<dbReference type="KEGG" id="aav:Aave_0875"/>
<dbReference type="eggNOG" id="COG0621">
    <property type="taxonomic scope" value="Bacteria"/>
</dbReference>
<dbReference type="HOGENOM" id="CLU_018697_2_0_4"/>
<dbReference type="OrthoDB" id="9805215at2"/>
<dbReference type="Proteomes" id="UP000002596">
    <property type="component" value="Chromosome"/>
</dbReference>
<dbReference type="GO" id="GO:0005829">
    <property type="term" value="C:cytosol"/>
    <property type="evidence" value="ECO:0007669"/>
    <property type="project" value="TreeGrafter"/>
</dbReference>
<dbReference type="GO" id="GO:0051539">
    <property type="term" value="F:4 iron, 4 sulfur cluster binding"/>
    <property type="evidence" value="ECO:0007669"/>
    <property type="project" value="UniProtKB-UniRule"/>
</dbReference>
<dbReference type="GO" id="GO:0046872">
    <property type="term" value="F:metal ion binding"/>
    <property type="evidence" value="ECO:0007669"/>
    <property type="project" value="UniProtKB-KW"/>
</dbReference>
<dbReference type="GO" id="GO:0035597">
    <property type="term" value="F:N6-isopentenyladenosine methylthiotransferase activity"/>
    <property type="evidence" value="ECO:0007669"/>
    <property type="project" value="TreeGrafter"/>
</dbReference>
<dbReference type="CDD" id="cd01335">
    <property type="entry name" value="Radical_SAM"/>
    <property type="match status" value="1"/>
</dbReference>
<dbReference type="FunFam" id="3.40.50.12160:FF:000001">
    <property type="entry name" value="tRNA-2-methylthio-N(6)-dimethylallyladenosine synthase"/>
    <property type="match status" value="1"/>
</dbReference>
<dbReference type="FunFam" id="3.80.30.20:FF:000001">
    <property type="entry name" value="tRNA-2-methylthio-N(6)-dimethylallyladenosine synthase 2"/>
    <property type="match status" value="1"/>
</dbReference>
<dbReference type="Gene3D" id="3.40.50.12160">
    <property type="entry name" value="Methylthiotransferase, N-terminal domain"/>
    <property type="match status" value="1"/>
</dbReference>
<dbReference type="Gene3D" id="3.80.30.20">
    <property type="entry name" value="tm_1862 like domain"/>
    <property type="match status" value="1"/>
</dbReference>
<dbReference type="HAMAP" id="MF_01864">
    <property type="entry name" value="tRNA_metthiotr_MiaB"/>
    <property type="match status" value="1"/>
</dbReference>
<dbReference type="InterPro" id="IPR006638">
    <property type="entry name" value="Elp3/MiaA/NifB-like_rSAM"/>
</dbReference>
<dbReference type="InterPro" id="IPR005839">
    <property type="entry name" value="Methylthiotransferase"/>
</dbReference>
<dbReference type="InterPro" id="IPR020612">
    <property type="entry name" value="Methylthiotransferase_CS"/>
</dbReference>
<dbReference type="InterPro" id="IPR013848">
    <property type="entry name" value="Methylthiotransferase_N"/>
</dbReference>
<dbReference type="InterPro" id="IPR038135">
    <property type="entry name" value="Methylthiotransferase_N_sf"/>
</dbReference>
<dbReference type="InterPro" id="IPR006463">
    <property type="entry name" value="MiaB_methiolase"/>
</dbReference>
<dbReference type="InterPro" id="IPR007197">
    <property type="entry name" value="rSAM"/>
</dbReference>
<dbReference type="InterPro" id="IPR023404">
    <property type="entry name" value="rSAM_horseshoe"/>
</dbReference>
<dbReference type="InterPro" id="IPR002792">
    <property type="entry name" value="TRAM_dom"/>
</dbReference>
<dbReference type="NCBIfam" id="TIGR01574">
    <property type="entry name" value="miaB-methiolase"/>
    <property type="match status" value="1"/>
</dbReference>
<dbReference type="NCBIfam" id="TIGR00089">
    <property type="entry name" value="MiaB/RimO family radical SAM methylthiotransferase"/>
    <property type="match status" value="1"/>
</dbReference>
<dbReference type="PANTHER" id="PTHR43020">
    <property type="entry name" value="CDK5 REGULATORY SUBUNIT-ASSOCIATED PROTEIN 1"/>
    <property type="match status" value="1"/>
</dbReference>
<dbReference type="PANTHER" id="PTHR43020:SF2">
    <property type="entry name" value="MITOCHONDRIAL TRNA METHYLTHIOTRANSFERASE CDK5RAP1"/>
    <property type="match status" value="1"/>
</dbReference>
<dbReference type="Pfam" id="PF04055">
    <property type="entry name" value="Radical_SAM"/>
    <property type="match status" value="1"/>
</dbReference>
<dbReference type="Pfam" id="PF01938">
    <property type="entry name" value="TRAM"/>
    <property type="match status" value="1"/>
</dbReference>
<dbReference type="Pfam" id="PF00919">
    <property type="entry name" value="UPF0004"/>
    <property type="match status" value="1"/>
</dbReference>
<dbReference type="SFLD" id="SFLDF00273">
    <property type="entry name" value="(dimethylallyl)adenosine_tRNA"/>
    <property type="match status" value="1"/>
</dbReference>
<dbReference type="SFLD" id="SFLDG01082">
    <property type="entry name" value="B12-binding_domain_containing"/>
    <property type="match status" value="1"/>
</dbReference>
<dbReference type="SFLD" id="SFLDG01061">
    <property type="entry name" value="methylthiotransferase"/>
    <property type="match status" value="1"/>
</dbReference>
<dbReference type="SMART" id="SM00729">
    <property type="entry name" value="Elp3"/>
    <property type="match status" value="1"/>
</dbReference>
<dbReference type="SUPFAM" id="SSF102114">
    <property type="entry name" value="Radical SAM enzymes"/>
    <property type="match status" value="1"/>
</dbReference>
<dbReference type="PROSITE" id="PS51449">
    <property type="entry name" value="MTTASE_N"/>
    <property type="match status" value="1"/>
</dbReference>
<dbReference type="PROSITE" id="PS01278">
    <property type="entry name" value="MTTASE_RADICAL"/>
    <property type="match status" value="1"/>
</dbReference>
<dbReference type="PROSITE" id="PS51918">
    <property type="entry name" value="RADICAL_SAM"/>
    <property type="match status" value="1"/>
</dbReference>
<dbReference type="PROSITE" id="PS50926">
    <property type="entry name" value="TRAM"/>
    <property type="match status" value="1"/>
</dbReference>